<evidence type="ECO:0000250" key="1">
    <source>
        <dbReference type="UniProtKB" id="Q64205"/>
    </source>
</evidence>
<evidence type="ECO:0000255" key="2">
    <source>
        <dbReference type="PROSITE-ProRule" id="PRU00108"/>
    </source>
</evidence>
<evidence type="ECO:0000256" key="3">
    <source>
        <dbReference type="SAM" id="MobiDB-lite"/>
    </source>
</evidence>
<evidence type="ECO:0000269" key="4">
    <source>
    </source>
</evidence>
<evidence type="ECO:0000269" key="5">
    <source>
    </source>
</evidence>
<evidence type="ECO:0000269" key="6">
    <source>
    </source>
</evidence>
<evidence type="ECO:0000305" key="7"/>
<evidence type="ECO:0000305" key="8">
    <source>
    </source>
</evidence>
<evidence type="ECO:0007744" key="9">
    <source>
        <dbReference type="PDB" id="4XRS"/>
    </source>
</evidence>
<evidence type="ECO:0007829" key="10">
    <source>
        <dbReference type="PDB" id="4XRS"/>
    </source>
</evidence>
<accession>O60479</accession>
<accession>B3KQL6</accession>
<proteinExistence type="evidence at protein level"/>
<keyword id="KW-0002">3D-structure</keyword>
<keyword id="KW-0010">Activator</keyword>
<keyword id="KW-0986">Amelogenesis imperfecta</keyword>
<keyword id="KW-0963">Cytoplasm</keyword>
<keyword id="KW-0217">Developmental protein</keyword>
<keyword id="KW-0238">DNA-binding</keyword>
<keyword id="KW-0371">Homeobox</keyword>
<keyword id="KW-0539">Nucleus</keyword>
<keyword id="KW-1267">Proteomics identification</keyword>
<keyword id="KW-1185">Reference proteome</keyword>
<keyword id="KW-0804">Transcription</keyword>
<keyword id="KW-0805">Transcription regulation</keyword>
<name>DLX3_HUMAN</name>
<gene>
    <name type="primary">DLX3</name>
</gene>
<comment type="function">
    <text evidence="1">Transcriptional activator (By similarity). Activates transcription of GNRHR, via binding to the downstream activin regulatory element (DARE) in the gene promoter (By similarity).</text>
</comment>
<comment type="subunit">
    <text evidence="1 5">Heterodimer with MEIS1 (PubMed:26550823). Interacts with IPO7; the interaction facilitates nuclear translocation of DLX3 in dental papilla cells (By similarity).</text>
</comment>
<comment type="interaction">
    <interactant intactId="EBI-3908248">
        <id>O60479</id>
    </interactant>
    <interactant intactId="EBI-21535880">
        <id>Q92870-2</id>
        <label>APBB2</label>
    </interactant>
    <organismsDiffer>false</organismsDiffer>
    <experiments>3</experiments>
</comment>
<comment type="interaction">
    <interactant intactId="EBI-3908248">
        <id>O60479</id>
    </interactant>
    <interactant intactId="EBI-930964">
        <id>P54253</id>
        <label>ATXN1</label>
    </interactant>
    <organismsDiffer>false</organismsDiffer>
    <experiments>3</experiments>
</comment>
<comment type="interaction">
    <interactant intactId="EBI-3908248">
        <id>O60479</id>
    </interactant>
    <interactant intactId="EBI-16429313">
        <id>B4DE54</id>
        <label>BANP</label>
    </interactant>
    <organismsDiffer>false</organismsDiffer>
    <experiments>3</experiments>
</comment>
<comment type="interaction">
    <interactant intactId="EBI-3908248">
        <id>O60479</id>
    </interactant>
    <interactant intactId="EBI-11524452">
        <id>Q8N9N5-2</id>
        <label>BANP</label>
    </interactant>
    <organismsDiffer>false</organismsDiffer>
    <experiments>3</experiments>
</comment>
<comment type="interaction">
    <interactant intactId="EBI-3908248">
        <id>O60479</id>
    </interactant>
    <interactant intactId="EBI-16429296">
        <id>Q8N9N5-7</id>
        <label>BANP</label>
    </interactant>
    <organismsDiffer>false</organismsDiffer>
    <experiments>3</experiments>
</comment>
<comment type="interaction">
    <interactant intactId="EBI-3908248">
        <id>O60479</id>
    </interactant>
    <interactant intactId="EBI-718729">
        <id>P55212</id>
        <label>CASP6</label>
    </interactant>
    <organismsDiffer>false</organismsDiffer>
    <experiments>3</experiments>
</comment>
<comment type="interaction">
    <interactant intactId="EBI-3908248">
        <id>O60479</id>
    </interactant>
    <interactant intactId="EBI-25840379">
        <id>Q14203-5</id>
        <label>DCTN1</label>
    </interactant>
    <organismsDiffer>false</organismsDiffer>
    <experiments>3</experiments>
</comment>
<comment type="interaction">
    <interactant intactId="EBI-3908248">
        <id>O60479</id>
    </interactant>
    <interactant intactId="EBI-348399">
        <id>P22607</id>
        <label>FGFR3</label>
    </interactant>
    <organismsDiffer>false</organismsDiffer>
    <experiments>3</experiments>
</comment>
<comment type="interaction">
    <interactant intactId="EBI-3908248">
        <id>O60479</id>
    </interactant>
    <interactant intactId="EBI-21194843">
        <id>Q9NP62</id>
        <label>GCM1</label>
    </interactant>
    <organismsDiffer>false</organismsDiffer>
    <experiments>2</experiments>
</comment>
<comment type="interaction">
    <interactant intactId="EBI-3908248">
        <id>O60479</id>
    </interactant>
    <interactant intactId="EBI-466029">
        <id>P42858</id>
        <label>HTT</label>
    </interactant>
    <organismsDiffer>false</organismsDiffer>
    <experiments>3</experiments>
</comment>
<comment type="interaction">
    <interactant intactId="EBI-3908248">
        <id>O60479</id>
    </interactant>
    <interactant intactId="EBI-21591415">
        <id>P13473-2</id>
        <label>LAMP2</label>
    </interactant>
    <organismsDiffer>false</organismsDiffer>
    <experiments>3</experiments>
</comment>
<comment type="interaction">
    <interactant intactId="EBI-3908248">
        <id>O60479</id>
    </interactant>
    <interactant intactId="EBI-17236143">
        <id>Q12837</id>
        <label>POU4F2</label>
    </interactant>
    <organismsDiffer>false</organismsDiffer>
    <experiments>3</experiments>
</comment>
<comment type="interaction">
    <interactant intactId="EBI-3908248">
        <id>O60479</id>
    </interactant>
    <interactant intactId="EBI-5280197">
        <id>O75400-2</id>
        <label>PRPF40A</label>
    </interactant>
    <organismsDiffer>false</organismsDiffer>
    <experiments>3</experiments>
</comment>
<comment type="interaction">
    <interactant intactId="EBI-3908248">
        <id>O60479</id>
    </interactant>
    <interactant intactId="EBI-985879">
        <id>P37840</id>
        <label>SNCA</label>
    </interactant>
    <organismsDiffer>false</organismsDiffer>
    <experiments>3</experiments>
</comment>
<comment type="interaction">
    <interactant intactId="EBI-3908248">
        <id>O60479</id>
    </interactant>
    <interactant intactId="EBI-741480">
        <id>Q9UMX0</id>
        <label>UBQLN1</label>
    </interactant>
    <organismsDiffer>false</organismsDiffer>
    <experiments>3</experiments>
</comment>
<comment type="subcellular location">
    <subcellularLocation>
        <location evidence="2">Nucleus</location>
    </subcellularLocation>
    <subcellularLocation>
        <location evidence="1">Cytoplasm</location>
    </subcellularLocation>
</comment>
<comment type="disease" evidence="6">
    <disease id="DI-02387">
        <name>Trichodentoosseous syndrome</name>
        <acronym>TDO</acronym>
        <description>An autosomal dominant disease characterized by curly kinky hair at birth, enamel hypoplasia, taurodontism, thickening of cortical bones and variable expression of craniofacial morphology.</description>
        <dbReference type="MIM" id="190320"/>
    </disease>
    <text>The disease is caused by variants affecting the gene represented in this entry.</text>
</comment>
<comment type="disease" evidence="4">
    <disease id="DI-00094">
        <name>Amelogenesis imperfecta 4</name>
        <acronym>AI4</acronym>
        <description>An autosomal dominant defect of enamel formation associated with enlarged pulp chambers. Enamel is thin, teeth are small and widely spaced.</description>
        <dbReference type="MIM" id="104510"/>
    </disease>
    <text>The disease is caused by variants affecting the gene represented in this entry.</text>
</comment>
<comment type="similarity">
    <text evidence="7">Belongs to the distal-less homeobox family.</text>
</comment>
<reference key="1">
    <citation type="journal article" date="1998" name="Hum. Mol. Genet.">
        <title>Identification of a mutation in DLX3 associated with tricho-dento-osseous (TDO) syndrome.</title>
        <authorList>
            <person name="Price J.A."/>
            <person name="Bowden D.W."/>
            <person name="Wright J.T."/>
            <person name="Pettenati M.J."/>
            <person name="Hart T.C."/>
        </authorList>
    </citation>
    <scope>NUCLEOTIDE SEQUENCE [GENOMIC DNA]</scope>
    <scope>INVOLVEMENT IN TDO</scope>
</reference>
<reference key="2">
    <citation type="journal article" date="2002" name="Proc. Natl. Acad. Sci. U.S.A.">
        <title>Genomic structure and functional control of the Dlx3-7 bigene cluster.</title>
        <authorList>
            <person name="Sumiyama K."/>
            <person name="Irvine S.Q."/>
            <person name="Stock D.W."/>
            <person name="Weiss K.M."/>
            <person name="Kawasaki K."/>
            <person name="Shimizu N."/>
            <person name="Shashikant C.S."/>
            <person name="Miller W."/>
            <person name="Ruddle F.H."/>
        </authorList>
    </citation>
    <scope>NUCLEOTIDE SEQUENCE [GENOMIC DNA]</scope>
    <source>
        <tissue>Foreskin</tissue>
    </source>
</reference>
<reference key="3">
    <citation type="journal article" date="2005" name="DNA Res.">
        <title>Signal sequence and keyword trap in silico for selection of full-length human cDNAs encoding secretion or membrane proteins from oligo-capped cDNA libraries.</title>
        <authorList>
            <person name="Otsuki T."/>
            <person name="Ota T."/>
            <person name="Nishikawa T."/>
            <person name="Hayashi K."/>
            <person name="Suzuki Y."/>
            <person name="Yamamoto J."/>
            <person name="Wakamatsu A."/>
            <person name="Kimura K."/>
            <person name="Sakamoto K."/>
            <person name="Hatano N."/>
            <person name="Kawai Y."/>
            <person name="Ishii S."/>
            <person name="Saito K."/>
            <person name="Kojima S."/>
            <person name="Sugiyama T."/>
            <person name="Ono T."/>
            <person name="Okano K."/>
            <person name="Yoshikawa Y."/>
            <person name="Aotsuka S."/>
            <person name="Sasaki N."/>
            <person name="Hattori A."/>
            <person name="Okumura K."/>
            <person name="Nagai K."/>
            <person name="Sugano S."/>
            <person name="Isogai T."/>
        </authorList>
    </citation>
    <scope>NUCLEOTIDE SEQUENCE [LARGE SCALE MRNA]</scope>
    <source>
        <tissue>Placenta</tissue>
    </source>
</reference>
<reference key="4">
    <citation type="submission" date="2005-09" db="EMBL/GenBank/DDBJ databases">
        <authorList>
            <person name="Mural R.J."/>
            <person name="Istrail S."/>
            <person name="Sutton G.G."/>
            <person name="Florea L."/>
            <person name="Halpern A.L."/>
            <person name="Mobarry C.M."/>
            <person name="Lippert R."/>
            <person name="Walenz B."/>
            <person name="Shatkay H."/>
            <person name="Dew I."/>
            <person name="Miller J.R."/>
            <person name="Flanigan M.J."/>
            <person name="Edwards N.J."/>
            <person name="Bolanos R."/>
            <person name="Fasulo D."/>
            <person name="Halldorsson B.V."/>
            <person name="Hannenhalli S."/>
            <person name="Turner R."/>
            <person name="Yooseph S."/>
            <person name="Lu F."/>
            <person name="Nusskern D.R."/>
            <person name="Shue B.C."/>
            <person name="Zheng X.H."/>
            <person name="Zhong F."/>
            <person name="Delcher A.L."/>
            <person name="Huson D.H."/>
            <person name="Kravitz S.A."/>
            <person name="Mouchard L."/>
            <person name="Reinert K."/>
            <person name="Remington K.A."/>
            <person name="Clark A.G."/>
            <person name="Waterman M.S."/>
            <person name="Eichler E.E."/>
            <person name="Adams M.D."/>
            <person name="Hunkapiller M.W."/>
            <person name="Myers E.W."/>
            <person name="Venter J.C."/>
        </authorList>
    </citation>
    <scope>NUCLEOTIDE SEQUENCE [LARGE SCALE GENOMIC DNA]</scope>
</reference>
<reference key="5">
    <citation type="journal article" date="2004" name="Genome Res.">
        <title>The status, quality, and expansion of the NIH full-length cDNA project: the Mammalian Gene Collection (MGC).</title>
        <authorList>
            <consortium name="The MGC Project Team"/>
        </authorList>
    </citation>
    <scope>NUCLEOTIDE SEQUENCE [LARGE SCALE MRNA]</scope>
    <source>
        <tissue>Eye</tissue>
        <tissue>Placenta</tissue>
    </source>
</reference>
<reference key="6">
    <citation type="journal article" date="2005" name="Am. J. Med. Genet. A">
        <title>DLX3 mutation associated with autosomal dominant amelogenesis imperfecta with taurodontism.</title>
        <authorList>
            <person name="Dong J."/>
            <person name="Amor D."/>
            <person name="Aldred M.J."/>
            <person name="Gu T."/>
            <person name="Escamilla M."/>
            <person name="MacDougall M."/>
        </authorList>
    </citation>
    <scope>INVOLVEMENT IN AI4</scope>
</reference>
<reference evidence="9" key="7">
    <citation type="journal article" date="2015" name="Nature">
        <title>DNA-dependent formation of transcription factor pairs alters their binding specificity.</title>
        <authorList>
            <person name="Jolma A."/>
            <person name="Yin Y."/>
            <person name="Nitta K.R."/>
            <person name="Dave K."/>
            <person name="Popov A."/>
            <person name="Taipale M."/>
            <person name="Enge M."/>
            <person name="Kivioja T."/>
            <person name="Morgunova E."/>
            <person name="Taipale J."/>
        </authorList>
    </citation>
    <scope>X-RAY CRYSTALLOGRAPHY (3.50 ANGSTROMS) OF 131-186 IN COMPLEX WITH MEIS1 AND DNA</scope>
    <scope>SUBUNIT</scope>
    <scope>DNA-BINDING</scope>
</reference>
<organism>
    <name type="scientific">Homo sapiens</name>
    <name type="common">Human</name>
    <dbReference type="NCBI Taxonomy" id="9606"/>
    <lineage>
        <taxon>Eukaryota</taxon>
        <taxon>Metazoa</taxon>
        <taxon>Chordata</taxon>
        <taxon>Craniata</taxon>
        <taxon>Vertebrata</taxon>
        <taxon>Euteleostomi</taxon>
        <taxon>Mammalia</taxon>
        <taxon>Eutheria</taxon>
        <taxon>Euarchontoglires</taxon>
        <taxon>Primates</taxon>
        <taxon>Haplorrhini</taxon>
        <taxon>Catarrhini</taxon>
        <taxon>Hominidae</taxon>
        <taxon>Homo</taxon>
    </lineage>
</organism>
<sequence length="287" mass="31738">MSGSFDRKLSSILTDISSSLSCHAGSKDSPTLPESSVTDLGYYSAPQHDYYSGQPYGQTVNPYTYHHQFNLNGLAGTGAYSPKSEYTYGASYRQYGAYREQPLPAQDPVSVKEEPEAEVRMVNGKPKKVRKPRTIYSSYQLAALQRRFQKAQYLALPERAELAAQLGLTQTQVKIWFQNRRSKFKKLYKNGEVPLEHSPNNSDSMACNSPPSPALWDTSSHSTPAPARSQLPPPLPYSASPSYLDDPTNSWYHAQNLSGPHLQQQPPQPATLHHASPGPPPNPGAVY</sequence>
<dbReference type="EMBL" id="AF028233">
    <property type="protein sequence ID" value="AAC14397.1"/>
    <property type="molecule type" value="Genomic_DNA"/>
</dbReference>
<dbReference type="EMBL" id="AF452638">
    <property type="protein sequence ID" value="AAL99504.1"/>
    <property type="molecule type" value="Genomic_DNA"/>
</dbReference>
<dbReference type="EMBL" id="AK075167">
    <property type="protein sequence ID" value="BAG52078.1"/>
    <property type="molecule type" value="mRNA"/>
</dbReference>
<dbReference type="EMBL" id="CH471109">
    <property type="protein sequence ID" value="EAW94650.1"/>
    <property type="molecule type" value="Genomic_DNA"/>
</dbReference>
<dbReference type="EMBL" id="BC012361">
    <property type="protein sequence ID" value="AAH12361.1"/>
    <property type="molecule type" value="mRNA"/>
</dbReference>
<dbReference type="EMBL" id="BC028970">
    <property type="protein sequence ID" value="AAH28970.1"/>
    <property type="molecule type" value="mRNA"/>
</dbReference>
<dbReference type="CCDS" id="CCDS11556.1"/>
<dbReference type="RefSeq" id="NP_005211.1">
    <property type="nucleotide sequence ID" value="NM_005220.3"/>
</dbReference>
<dbReference type="PDB" id="4XRS">
    <property type="method" value="X-ray"/>
    <property type="resolution" value="3.50 A"/>
    <property type="chains" value="G/I=131-186"/>
</dbReference>
<dbReference type="PDBsum" id="4XRS"/>
<dbReference type="SMR" id="O60479"/>
<dbReference type="BioGRID" id="108091">
    <property type="interactions" value="5"/>
</dbReference>
<dbReference type="FunCoup" id="O60479">
    <property type="interactions" value="237"/>
</dbReference>
<dbReference type="IntAct" id="O60479">
    <property type="interactions" value="17"/>
</dbReference>
<dbReference type="MINT" id="O60479"/>
<dbReference type="STRING" id="9606.ENSP00000389870"/>
<dbReference type="iPTMnet" id="O60479"/>
<dbReference type="PhosphoSitePlus" id="O60479"/>
<dbReference type="BioMuta" id="DLX3"/>
<dbReference type="MassIVE" id="O60479"/>
<dbReference type="PaxDb" id="9606-ENSP00000389870"/>
<dbReference type="PeptideAtlas" id="O60479"/>
<dbReference type="ProteomicsDB" id="49421"/>
<dbReference type="Antibodypedia" id="17996">
    <property type="antibodies" value="254 antibodies from 32 providers"/>
</dbReference>
<dbReference type="DNASU" id="1747"/>
<dbReference type="Ensembl" id="ENST00000434704.2">
    <property type="protein sequence ID" value="ENSP00000389870.2"/>
    <property type="gene ID" value="ENSG00000064195.7"/>
</dbReference>
<dbReference type="GeneID" id="1747"/>
<dbReference type="KEGG" id="hsa:1747"/>
<dbReference type="MANE-Select" id="ENST00000434704.2">
    <property type="protein sequence ID" value="ENSP00000389870.2"/>
    <property type="RefSeq nucleotide sequence ID" value="NM_005220.3"/>
    <property type="RefSeq protein sequence ID" value="NP_005211.1"/>
</dbReference>
<dbReference type="UCSC" id="uc002ipy.3">
    <property type="organism name" value="human"/>
</dbReference>
<dbReference type="AGR" id="HGNC:2916"/>
<dbReference type="CTD" id="1747"/>
<dbReference type="DisGeNET" id="1747"/>
<dbReference type="GeneCards" id="DLX3"/>
<dbReference type="HGNC" id="HGNC:2916">
    <property type="gene designation" value="DLX3"/>
</dbReference>
<dbReference type="HPA" id="ENSG00000064195">
    <property type="expression patterns" value="Tissue enriched (skin)"/>
</dbReference>
<dbReference type="MalaCards" id="DLX3"/>
<dbReference type="MIM" id="104510">
    <property type="type" value="phenotype"/>
</dbReference>
<dbReference type="MIM" id="190320">
    <property type="type" value="phenotype"/>
</dbReference>
<dbReference type="MIM" id="600525">
    <property type="type" value="gene"/>
</dbReference>
<dbReference type="neXtProt" id="NX_O60479"/>
<dbReference type="OpenTargets" id="ENSG00000064195"/>
<dbReference type="Orphanet" id="100034">
    <property type="disease" value="Hypomaturation-hypoplastic amelogenesis imperfecta with taurodontism"/>
</dbReference>
<dbReference type="Orphanet" id="3352">
    <property type="disease" value="Tricho-dento-osseous syndrome"/>
</dbReference>
<dbReference type="PharmGKB" id="PA27371"/>
<dbReference type="VEuPathDB" id="HostDB:ENSG00000064195"/>
<dbReference type="eggNOG" id="KOG0850">
    <property type="taxonomic scope" value="Eukaryota"/>
</dbReference>
<dbReference type="GeneTree" id="ENSGT00940000158951"/>
<dbReference type="HOGENOM" id="CLU_074733_1_0_1"/>
<dbReference type="InParanoid" id="O60479"/>
<dbReference type="OMA" id="HEYYPSQ"/>
<dbReference type="OrthoDB" id="6159439at2759"/>
<dbReference type="PAN-GO" id="O60479">
    <property type="GO annotations" value="5 GO annotations based on evolutionary models"/>
</dbReference>
<dbReference type="PhylomeDB" id="O60479"/>
<dbReference type="TreeFam" id="TF350606"/>
<dbReference type="PathwayCommons" id="O60479"/>
<dbReference type="SignaLink" id="O60479"/>
<dbReference type="SIGNOR" id="O60479"/>
<dbReference type="BioGRID-ORCS" id="1747">
    <property type="hits" value="46 hits in 1169 CRISPR screens"/>
</dbReference>
<dbReference type="CD-CODE" id="1A18FFC4">
    <property type="entry name" value="Paraspeckle"/>
</dbReference>
<dbReference type="GeneWiki" id="DLX3"/>
<dbReference type="GeneWiki" id="DLX3_(gene)"/>
<dbReference type="GenomeRNAi" id="1747"/>
<dbReference type="Pharos" id="O60479">
    <property type="development level" value="Tbio"/>
</dbReference>
<dbReference type="PRO" id="PR:O60479"/>
<dbReference type="Proteomes" id="UP000005640">
    <property type="component" value="Chromosome 17"/>
</dbReference>
<dbReference type="RNAct" id="O60479">
    <property type="molecule type" value="protein"/>
</dbReference>
<dbReference type="Bgee" id="ENSG00000064195">
    <property type="expression patterns" value="Expressed in skin of leg and 96 other cell types or tissues"/>
</dbReference>
<dbReference type="ExpressionAtlas" id="O60479">
    <property type="expression patterns" value="baseline and differential"/>
</dbReference>
<dbReference type="GO" id="GO:0000785">
    <property type="term" value="C:chromatin"/>
    <property type="evidence" value="ECO:0000247"/>
    <property type="project" value="NTNU_SB"/>
</dbReference>
<dbReference type="GO" id="GO:0005737">
    <property type="term" value="C:cytoplasm"/>
    <property type="evidence" value="ECO:0000250"/>
    <property type="project" value="UniProtKB"/>
</dbReference>
<dbReference type="GO" id="GO:0005634">
    <property type="term" value="C:nucleus"/>
    <property type="evidence" value="ECO:0000250"/>
    <property type="project" value="UniProtKB"/>
</dbReference>
<dbReference type="GO" id="GO:0003682">
    <property type="term" value="F:chromatin binding"/>
    <property type="evidence" value="ECO:0007669"/>
    <property type="project" value="Ensembl"/>
</dbReference>
<dbReference type="GO" id="GO:0003677">
    <property type="term" value="F:DNA binding"/>
    <property type="evidence" value="ECO:0000314"/>
    <property type="project" value="UniProtKB"/>
</dbReference>
<dbReference type="GO" id="GO:0001228">
    <property type="term" value="F:DNA-binding transcription activator activity, RNA polymerase II-specific"/>
    <property type="evidence" value="ECO:0007669"/>
    <property type="project" value="Ensembl"/>
</dbReference>
<dbReference type="GO" id="GO:0003700">
    <property type="term" value="F:DNA-binding transcription factor activity"/>
    <property type="evidence" value="ECO:0000304"/>
    <property type="project" value="ProtInc"/>
</dbReference>
<dbReference type="GO" id="GO:0000981">
    <property type="term" value="F:DNA-binding transcription factor activity, RNA polymerase II-specific"/>
    <property type="evidence" value="ECO:0000247"/>
    <property type="project" value="NTNU_SB"/>
</dbReference>
<dbReference type="GO" id="GO:0000978">
    <property type="term" value="F:RNA polymerase II cis-regulatory region sequence-specific DNA binding"/>
    <property type="evidence" value="ECO:0000318"/>
    <property type="project" value="GO_Central"/>
</dbReference>
<dbReference type="GO" id="GO:1990837">
    <property type="term" value="F:sequence-specific double-stranded DNA binding"/>
    <property type="evidence" value="ECO:0000314"/>
    <property type="project" value="ARUK-UCL"/>
</dbReference>
<dbReference type="GO" id="GO:0000976">
    <property type="term" value="F:transcription cis-regulatory region binding"/>
    <property type="evidence" value="ECO:0000250"/>
    <property type="project" value="UniProtKB"/>
</dbReference>
<dbReference type="GO" id="GO:0001568">
    <property type="term" value="P:blood vessel development"/>
    <property type="evidence" value="ECO:0007669"/>
    <property type="project" value="Ensembl"/>
</dbReference>
<dbReference type="GO" id="GO:0030509">
    <property type="term" value="P:BMP signaling pathway"/>
    <property type="evidence" value="ECO:0007669"/>
    <property type="project" value="Ensembl"/>
</dbReference>
<dbReference type="GO" id="GO:0048706">
    <property type="term" value="P:embryonic skeletal system development"/>
    <property type="evidence" value="ECO:0000318"/>
    <property type="project" value="GO_Central"/>
</dbReference>
<dbReference type="GO" id="GO:0030855">
    <property type="term" value="P:epithelial cell differentiation"/>
    <property type="evidence" value="ECO:0000318"/>
    <property type="project" value="GO_Central"/>
</dbReference>
<dbReference type="GO" id="GO:0010467">
    <property type="term" value="P:gene expression"/>
    <property type="evidence" value="ECO:0007669"/>
    <property type="project" value="Ensembl"/>
</dbReference>
<dbReference type="GO" id="GO:0035315">
    <property type="term" value="P:hair cell differentiation"/>
    <property type="evidence" value="ECO:0007669"/>
    <property type="project" value="Ensembl"/>
</dbReference>
<dbReference type="GO" id="GO:0071335">
    <property type="term" value="P:hair follicle cell proliferation"/>
    <property type="evidence" value="ECO:0007669"/>
    <property type="project" value="Ensembl"/>
</dbReference>
<dbReference type="GO" id="GO:0031069">
    <property type="term" value="P:hair follicle morphogenesis"/>
    <property type="evidence" value="ECO:0007669"/>
    <property type="project" value="Ensembl"/>
</dbReference>
<dbReference type="GO" id="GO:0071895">
    <property type="term" value="P:odontoblast differentiation"/>
    <property type="evidence" value="ECO:0007669"/>
    <property type="project" value="Ensembl"/>
</dbReference>
<dbReference type="GO" id="GO:0042475">
    <property type="term" value="P:odontogenesis of dentin-containing tooth"/>
    <property type="evidence" value="ECO:0007669"/>
    <property type="project" value="Ensembl"/>
</dbReference>
<dbReference type="GO" id="GO:0001890">
    <property type="term" value="P:placenta development"/>
    <property type="evidence" value="ECO:0007669"/>
    <property type="project" value="Ensembl"/>
</dbReference>
<dbReference type="GO" id="GO:0045944">
    <property type="term" value="P:positive regulation of transcription by RNA polymerase II"/>
    <property type="evidence" value="ECO:0000250"/>
    <property type="project" value="UniProtKB"/>
</dbReference>
<dbReference type="GO" id="GO:0006357">
    <property type="term" value="P:regulation of transcription by RNA polymerase II"/>
    <property type="evidence" value="ECO:0000318"/>
    <property type="project" value="GO_Central"/>
</dbReference>
<dbReference type="GO" id="GO:0016055">
    <property type="term" value="P:Wnt signaling pathway"/>
    <property type="evidence" value="ECO:0007669"/>
    <property type="project" value="Ensembl"/>
</dbReference>
<dbReference type="CDD" id="cd00086">
    <property type="entry name" value="homeodomain"/>
    <property type="match status" value="1"/>
</dbReference>
<dbReference type="FunFam" id="1.10.10.60:FF:000048">
    <property type="entry name" value="Distal-less homeobox 2"/>
    <property type="match status" value="1"/>
</dbReference>
<dbReference type="Gene3D" id="1.10.10.60">
    <property type="entry name" value="Homeodomain-like"/>
    <property type="match status" value="1"/>
</dbReference>
<dbReference type="InterPro" id="IPR050460">
    <property type="entry name" value="Distal-less_Homeobox_TF"/>
</dbReference>
<dbReference type="InterPro" id="IPR022135">
    <property type="entry name" value="Distal-less_N"/>
</dbReference>
<dbReference type="InterPro" id="IPR001356">
    <property type="entry name" value="HD"/>
</dbReference>
<dbReference type="InterPro" id="IPR020479">
    <property type="entry name" value="HD_metazoa"/>
</dbReference>
<dbReference type="InterPro" id="IPR017970">
    <property type="entry name" value="Homeobox_CS"/>
</dbReference>
<dbReference type="InterPro" id="IPR009057">
    <property type="entry name" value="Homeodomain-like_sf"/>
</dbReference>
<dbReference type="InterPro" id="IPR000047">
    <property type="entry name" value="HTH_motif"/>
</dbReference>
<dbReference type="PANTHER" id="PTHR24327">
    <property type="entry name" value="HOMEOBOX PROTEIN"/>
    <property type="match status" value="1"/>
</dbReference>
<dbReference type="PANTHER" id="PTHR24327:SF28">
    <property type="entry name" value="HOMEOBOX PROTEIN DLX-3"/>
    <property type="match status" value="1"/>
</dbReference>
<dbReference type="Pfam" id="PF12413">
    <property type="entry name" value="DLL_N"/>
    <property type="match status" value="1"/>
</dbReference>
<dbReference type="Pfam" id="PF00046">
    <property type="entry name" value="Homeodomain"/>
    <property type="match status" value="1"/>
</dbReference>
<dbReference type="PRINTS" id="PR00024">
    <property type="entry name" value="HOMEOBOX"/>
</dbReference>
<dbReference type="PRINTS" id="PR00031">
    <property type="entry name" value="HTHREPRESSR"/>
</dbReference>
<dbReference type="SMART" id="SM00389">
    <property type="entry name" value="HOX"/>
    <property type="match status" value="1"/>
</dbReference>
<dbReference type="SUPFAM" id="SSF46689">
    <property type="entry name" value="Homeodomain-like"/>
    <property type="match status" value="1"/>
</dbReference>
<dbReference type="PROSITE" id="PS00027">
    <property type="entry name" value="HOMEOBOX_1"/>
    <property type="match status" value="1"/>
</dbReference>
<dbReference type="PROSITE" id="PS50071">
    <property type="entry name" value="HOMEOBOX_2"/>
    <property type="match status" value="1"/>
</dbReference>
<protein>
    <recommendedName>
        <fullName>Homeobox protein DLX-3</fullName>
    </recommendedName>
</protein>
<feature type="chain" id="PRO_0000049026" description="Homeobox protein DLX-3">
    <location>
        <begin position="1"/>
        <end position="287"/>
    </location>
</feature>
<feature type="DNA-binding region" description="Homeobox" evidence="2">
    <location>
        <begin position="129"/>
        <end position="188"/>
    </location>
</feature>
<feature type="region of interest" description="Disordered" evidence="3">
    <location>
        <begin position="20"/>
        <end position="39"/>
    </location>
</feature>
<feature type="region of interest" description="Interaction with DNA" evidence="8">
    <location>
        <begin position="131"/>
        <end position="181"/>
    </location>
</feature>
<feature type="region of interest" description="Disordered" evidence="3">
    <location>
        <begin position="195"/>
        <end position="287"/>
    </location>
</feature>
<feature type="compositionally biased region" description="Polar residues" evidence="3">
    <location>
        <begin position="28"/>
        <end position="38"/>
    </location>
</feature>
<feature type="compositionally biased region" description="Polar residues" evidence="3">
    <location>
        <begin position="198"/>
        <end position="209"/>
    </location>
</feature>
<feature type="compositionally biased region" description="Polar residues" evidence="3">
    <location>
        <begin position="247"/>
        <end position="265"/>
    </location>
</feature>
<feature type="compositionally biased region" description="Pro residues" evidence="3">
    <location>
        <begin position="277"/>
        <end position="287"/>
    </location>
</feature>
<feature type="strand" evidence="10">
    <location>
        <begin position="138"/>
        <end position="141"/>
    </location>
</feature>
<feature type="turn" evidence="10">
    <location>
        <begin position="142"/>
        <end position="144"/>
    </location>
</feature>
<feature type="helix" evidence="10">
    <location>
        <begin position="145"/>
        <end position="150"/>
    </location>
</feature>
<feature type="helix" evidence="10">
    <location>
        <begin position="159"/>
        <end position="163"/>
    </location>
</feature>
<feature type="turn" evidence="10">
    <location>
        <begin position="164"/>
        <end position="166"/>
    </location>
</feature>
<feature type="helix" evidence="10">
    <location>
        <begin position="171"/>
        <end position="178"/>
    </location>
</feature>